<evidence type="ECO:0000255" key="1">
    <source>
        <dbReference type="HAMAP-Rule" id="MF_01167"/>
    </source>
</evidence>
<evidence type="ECO:0000305" key="2"/>
<reference key="1">
    <citation type="journal article" date="2009" name="PLoS Genet.">
        <title>Organised genome dynamics in the Escherichia coli species results in highly diverse adaptive paths.</title>
        <authorList>
            <person name="Touchon M."/>
            <person name="Hoede C."/>
            <person name="Tenaillon O."/>
            <person name="Barbe V."/>
            <person name="Baeriswyl S."/>
            <person name="Bidet P."/>
            <person name="Bingen E."/>
            <person name="Bonacorsi S."/>
            <person name="Bouchier C."/>
            <person name="Bouvet O."/>
            <person name="Calteau A."/>
            <person name="Chiapello H."/>
            <person name="Clermont O."/>
            <person name="Cruveiller S."/>
            <person name="Danchin A."/>
            <person name="Diard M."/>
            <person name="Dossat C."/>
            <person name="Karoui M.E."/>
            <person name="Frapy E."/>
            <person name="Garry L."/>
            <person name="Ghigo J.M."/>
            <person name="Gilles A.M."/>
            <person name="Johnson J."/>
            <person name="Le Bouguenec C."/>
            <person name="Lescat M."/>
            <person name="Mangenot S."/>
            <person name="Martinez-Jehanne V."/>
            <person name="Matic I."/>
            <person name="Nassif X."/>
            <person name="Oztas S."/>
            <person name="Petit M.A."/>
            <person name="Pichon C."/>
            <person name="Rouy Z."/>
            <person name="Ruf C.S."/>
            <person name="Schneider D."/>
            <person name="Tourret J."/>
            <person name="Vacherie B."/>
            <person name="Vallenet D."/>
            <person name="Medigue C."/>
            <person name="Rocha E.P.C."/>
            <person name="Denamur E."/>
        </authorList>
    </citation>
    <scope>NUCLEOTIDE SEQUENCE [LARGE SCALE GENOMIC DNA]</scope>
    <source>
        <strain>ED1a</strain>
    </source>
</reference>
<accession>B7MXT4</accession>
<sequence length="379" mass="41591">MSGFLPFSRPAMGVEELAAVKEVLESGWITTGPKNQALEQAFCQLTGNQHAIAVSSATAGMHITLMALEIGKGDEVITPSLTWVSTLNMISLLGATPVMVDVDRDTLMVTPEAIEAAITPRTKAIIPVHYAGAPADIDAIRAIGERYGIAVIEDAAHAVGMYYKGRHIGAKGTAIFSFHAIKNITCAEGGLIVTDNENLARQLRMLKFHGLGVDAYDRHTWGRAPQAEVLTPGYKYNLTDINAAIALTQLVKLEHLNTRRREIAQQYQQALAALPFQPLSLPAWPHVHAWHLFIIRVDEQRCGISRDALMEALKERGIGAGLHFRAAHTQKYYRERFPTLSLPNTEWNSERICSLPLFPDMTTADADRVITALKQLAGQ</sequence>
<keyword id="KW-0032">Aminotransferase</keyword>
<keyword id="KW-0046">Antibiotic resistance</keyword>
<keyword id="KW-0441">Lipid A biosynthesis</keyword>
<keyword id="KW-0444">Lipid biosynthesis</keyword>
<keyword id="KW-0443">Lipid metabolism</keyword>
<keyword id="KW-0448">Lipopolysaccharide biosynthesis</keyword>
<keyword id="KW-0663">Pyridoxal phosphate</keyword>
<keyword id="KW-0808">Transferase</keyword>
<organism>
    <name type="scientific">Escherichia coli O81 (strain ED1a)</name>
    <dbReference type="NCBI Taxonomy" id="585397"/>
    <lineage>
        <taxon>Bacteria</taxon>
        <taxon>Pseudomonadati</taxon>
        <taxon>Pseudomonadota</taxon>
        <taxon>Gammaproteobacteria</taxon>
        <taxon>Enterobacterales</taxon>
        <taxon>Enterobacteriaceae</taxon>
        <taxon>Escherichia</taxon>
    </lineage>
</organism>
<feature type="chain" id="PRO_0000380527" description="UDP-4-amino-4-deoxy-L-arabinose--oxoglutarate aminotransferase">
    <location>
        <begin position="1"/>
        <end position="379"/>
    </location>
</feature>
<feature type="modified residue" description="N6-(pyridoxal phosphate)lysine" evidence="1">
    <location>
        <position position="182"/>
    </location>
</feature>
<protein>
    <recommendedName>
        <fullName evidence="1">UDP-4-amino-4-deoxy-L-arabinose--oxoglutarate aminotransferase</fullName>
        <ecNumber evidence="1">2.6.1.87</ecNumber>
    </recommendedName>
    <alternativeName>
        <fullName evidence="1">UDP-(beta-L-threo-pentapyranosyl-4''-ulose diphosphate) aminotransferase</fullName>
        <shortName evidence="1">UDP-Ara4O aminotransferase</shortName>
    </alternativeName>
    <alternativeName>
        <fullName evidence="1">UDP-4-amino-4-deoxy-L-arabinose aminotransferase</fullName>
    </alternativeName>
</protein>
<proteinExistence type="inferred from homology"/>
<gene>
    <name evidence="1" type="primary">arnB</name>
    <name type="ordered locus">ECED1_2719</name>
</gene>
<dbReference type="EC" id="2.6.1.87" evidence="1"/>
<dbReference type="EMBL" id="CU928162">
    <property type="protein sequence ID" value="CAR08900.2"/>
    <property type="status" value="ALT_INIT"/>
    <property type="molecule type" value="Genomic_DNA"/>
</dbReference>
<dbReference type="RefSeq" id="WP_024185501.1">
    <property type="nucleotide sequence ID" value="NC_011745.1"/>
</dbReference>
<dbReference type="SMR" id="B7MXT4"/>
<dbReference type="KEGG" id="ecq:ECED1_2719"/>
<dbReference type="HOGENOM" id="CLU_033332_0_3_6"/>
<dbReference type="UniPathway" id="UPA00030"/>
<dbReference type="UniPathway" id="UPA00032">
    <property type="reaction ID" value="UER00493"/>
</dbReference>
<dbReference type="Proteomes" id="UP000000748">
    <property type="component" value="Chromosome"/>
</dbReference>
<dbReference type="GO" id="GO:0016020">
    <property type="term" value="C:membrane"/>
    <property type="evidence" value="ECO:0007669"/>
    <property type="project" value="GOC"/>
</dbReference>
<dbReference type="GO" id="GO:0030170">
    <property type="term" value="F:pyridoxal phosphate binding"/>
    <property type="evidence" value="ECO:0007669"/>
    <property type="project" value="TreeGrafter"/>
</dbReference>
<dbReference type="GO" id="GO:0099620">
    <property type="term" value="F:UDP-4-amino-4-deoxy-L-arabinose aminotransferase"/>
    <property type="evidence" value="ECO:0007669"/>
    <property type="project" value="UniProtKB-EC"/>
</dbReference>
<dbReference type="GO" id="GO:0009245">
    <property type="term" value="P:lipid A biosynthetic process"/>
    <property type="evidence" value="ECO:0007669"/>
    <property type="project" value="UniProtKB-KW"/>
</dbReference>
<dbReference type="GO" id="GO:0009103">
    <property type="term" value="P:lipopolysaccharide biosynthetic process"/>
    <property type="evidence" value="ECO:0007669"/>
    <property type="project" value="UniProtKB-UniRule"/>
</dbReference>
<dbReference type="GO" id="GO:0046677">
    <property type="term" value="P:response to antibiotic"/>
    <property type="evidence" value="ECO:0007669"/>
    <property type="project" value="UniProtKB-KW"/>
</dbReference>
<dbReference type="CDD" id="cd00616">
    <property type="entry name" value="AHBA_syn"/>
    <property type="match status" value="1"/>
</dbReference>
<dbReference type="FunFam" id="3.40.640.10:FF:000040">
    <property type="entry name" value="UDP-4-amino-4-deoxy-L-arabinose--oxoglutarate aminotransferase"/>
    <property type="match status" value="1"/>
</dbReference>
<dbReference type="FunFam" id="3.90.1150.10:FF:000030">
    <property type="entry name" value="UDP-4-amino-4-deoxy-L-arabinose--oxoglutarate aminotransferase"/>
    <property type="match status" value="1"/>
</dbReference>
<dbReference type="Gene3D" id="3.90.1150.10">
    <property type="entry name" value="Aspartate Aminotransferase, domain 1"/>
    <property type="match status" value="1"/>
</dbReference>
<dbReference type="Gene3D" id="3.40.640.10">
    <property type="entry name" value="Type I PLP-dependent aspartate aminotransferase-like (Major domain)"/>
    <property type="match status" value="1"/>
</dbReference>
<dbReference type="HAMAP" id="MF_01167">
    <property type="entry name" value="ArnB_transfer"/>
    <property type="match status" value="1"/>
</dbReference>
<dbReference type="InterPro" id="IPR022850">
    <property type="entry name" value="ArnB_NH2Trfase"/>
</dbReference>
<dbReference type="InterPro" id="IPR000653">
    <property type="entry name" value="DegT/StrS_aminotransferase"/>
</dbReference>
<dbReference type="InterPro" id="IPR015424">
    <property type="entry name" value="PyrdxlP-dep_Trfase"/>
</dbReference>
<dbReference type="InterPro" id="IPR015421">
    <property type="entry name" value="PyrdxlP-dep_Trfase_major"/>
</dbReference>
<dbReference type="InterPro" id="IPR015422">
    <property type="entry name" value="PyrdxlP-dep_Trfase_small"/>
</dbReference>
<dbReference type="NCBIfam" id="NF008658">
    <property type="entry name" value="PRK11658.1"/>
    <property type="match status" value="1"/>
</dbReference>
<dbReference type="PANTHER" id="PTHR30244">
    <property type="entry name" value="TRANSAMINASE"/>
    <property type="match status" value="1"/>
</dbReference>
<dbReference type="PANTHER" id="PTHR30244:SF41">
    <property type="entry name" value="UDP-4-AMINO-4-DEOXY-L-ARABINOSE--OXOGLUTARATE AMINOTRANSFERASE"/>
    <property type="match status" value="1"/>
</dbReference>
<dbReference type="Pfam" id="PF01041">
    <property type="entry name" value="DegT_DnrJ_EryC1"/>
    <property type="match status" value="1"/>
</dbReference>
<dbReference type="PIRSF" id="PIRSF000390">
    <property type="entry name" value="PLP_StrS"/>
    <property type="match status" value="1"/>
</dbReference>
<dbReference type="SUPFAM" id="SSF53383">
    <property type="entry name" value="PLP-dependent transferases"/>
    <property type="match status" value="1"/>
</dbReference>
<comment type="function">
    <text evidence="1">Catalyzes the conversion of UDP-4-keto-arabinose (UDP-Ara4O) to UDP-4-amino-4-deoxy-L-arabinose (UDP-L-Ara4N). The modified arabinose is attached to lipid A and is required for resistance to polymyxin and cationic antimicrobial peptides.</text>
</comment>
<comment type="catalytic activity">
    <reaction evidence="1">
        <text>UDP-4-amino-4-deoxy-beta-L-arabinose + 2-oxoglutarate = UDP-beta-L-threo-pentopyranos-4-ulose + L-glutamate</text>
        <dbReference type="Rhea" id="RHEA:24710"/>
        <dbReference type="ChEBI" id="CHEBI:16810"/>
        <dbReference type="ChEBI" id="CHEBI:29985"/>
        <dbReference type="ChEBI" id="CHEBI:58708"/>
        <dbReference type="ChEBI" id="CHEBI:58710"/>
        <dbReference type="EC" id="2.6.1.87"/>
    </reaction>
</comment>
<comment type="cofactor">
    <cofactor evidence="1">
        <name>pyridoxal 5'-phosphate</name>
        <dbReference type="ChEBI" id="CHEBI:597326"/>
    </cofactor>
</comment>
<comment type="pathway">
    <text evidence="1">Nucleotide-sugar biosynthesis; UDP-4-deoxy-4-formamido-beta-L-arabinose biosynthesis; UDP-4-deoxy-4-formamido-beta-L-arabinose from UDP-alpha-D-glucuronate: step 2/3.</text>
</comment>
<comment type="pathway">
    <text evidence="1">Bacterial outer membrane biogenesis; lipopolysaccharide biosynthesis.</text>
</comment>
<comment type="subunit">
    <text evidence="1">Homodimer.</text>
</comment>
<comment type="similarity">
    <text evidence="1">Belongs to the DegT/DnrJ/EryC1 family. ArnB subfamily.</text>
</comment>
<comment type="sequence caution" evidence="2">
    <conflict type="erroneous initiation">
        <sequence resource="EMBL-CDS" id="CAR08900"/>
    </conflict>
</comment>
<name>ARNB_ECO81</name>